<organism>
    <name type="scientific">Homo sapiens</name>
    <name type="common">Human</name>
    <dbReference type="NCBI Taxonomy" id="9606"/>
    <lineage>
        <taxon>Eukaryota</taxon>
        <taxon>Metazoa</taxon>
        <taxon>Chordata</taxon>
        <taxon>Craniata</taxon>
        <taxon>Vertebrata</taxon>
        <taxon>Euteleostomi</taxon>
        <taxon>Mammalia</taxon>
        <taxon>Eutheria</taxon>
        <taxon>Euarchontoglires</taxon>
        <taxon>Primates</taxon>
        <taxon>Haplorrhini</taxon>
        <taxon>Catarrhini</taxon>
        <taxon>Hominidae</taxon>
        <taxon>Homo</taxon>
    </lineage>
</organism>
<comment type="function">
    <text>Dual specificity protein kinase activity catalyzing autophosphorylation and phosphorylation of exogenous substrates on both serine/threonine and tyrosine residues. Phosphorylates cofilin at 'Ser-3'. May play an important role in spermatogenesis.</text>
</comment>
<comment type="catalytic activity">
    <reaction>
        <text>L-seryl-[protein] + ATP = O-phospho-L-seryl-[protein] + ADP + H(+)</text>
        <dbReference type="Rhea" id="RHEA:17989"/>
        <dbReference type="Rhea" id="RHEA-COMP:9863"/>
        <dbReference type="Rhea" id="RHEA-COMP:11604"/>
        <dbReference type="ChEBI" id="CHEBI:15378"/>
        <dbReference type="ChEBI" id="CHEBI:29999"/>
        <dbReference type="ChEBI" id="CHEBI:30616"/>
        <dbReference type="ChEBI" id="CHEBI:83421"/>
        <dbReference type="ChEBI" id="CHEBI:456216"/>
        <dbReference type="EC" id="2.7.12.1"/>
    </reaction>
</comment>
<comment type="catalytic activity">
    <reaction>
        <text>L-threonyl-[protein] + ATP = O-phospho-L-threonyl-[protein] + ADP + H(+)</text>
        <dbReference type="Rhea" id="RHEA:46608"/>
        <dbReference type="Rhea" id="RHEA-COMP:11060"/>
        <dbReference type="Rhea" id="RHEA-COMP:11605"/>
        <dbReference type="ChEBI" id="CHEBI:15378"/>
        <dbReference type="ChEBI" id="CHEBI:30013"/>
        <dbReference type="ChEBI" id="CHEBI:30616"/>
        <dbReference type="ChEBI" id="CHEBI:61977"/>
        <dbReference type="ChEBI" id="CHEBI:456216"/>
        <dbReference type="EC" id="2.7.12.1"/>
    </reaction>
</comment>
<comment type="catalytic activity">
    <reaction>
        <text>L-tyrosyl-[protein] + ATP = O-phospho-L-tyrosyl-[protein] + ADP + H(+)</text>
        <dbReference type="Rhea" id="RHEA:10596"/>
        <dbReference type="Rhea" id="RHEA-COMP:10136"/>
        <dbReference type="Rhea" id="RHEA-COMP:20101"/>
        <dbReference type="ChEBI" id="CHEBI:15378"/>
        <dbReference type="ChEBI" id="CHEBI:30616"/>
        <dbReference type="ChEBI" id="CHEBI:46858"/>
        <dbReference type="ChEBI" id="CHEBI:61978"/>
        <dbReference type="ChEBI" id="CHEBI:456216"/>
        <dbReference type="EC" id="2.7.12.1"/>
    </reaction>
</comment>
<comment type="cofactor">
    <cofactor evidence="1">
        <name>Mg(2+)</name>
        <dbReference type="ChEBI" id="CHEBI:18420"/>
    </cofactor>
</comment>
<comment type="cofactor">
    <cofactor evidence="1">
        <name>Mn(2+)</name>
        <dbReference type="ChEBI" id="CHEBI:29035"/>
    </cofactor>
</comment>
<comment type="activity regulation">
    <text evidence="1">Activated by autophosphorylation on Ser-219.</text>
</comment>
<comment type="interaction">
    <interactant intactId="EBI-1384110">
        <id>Q96S53</id>
    </interactant>
    <interactant intactId="EBI-352572">
        <id>P08238</id>
        <label>HSP90AB1</label>
    </interactant>
    <organismsDiffer>false</organismsDiffer>
    <experiments>3</experiments>
</comment>
<comment type="interaction">
    <interactant intactId="EBI-1384110">
        <id>Q96S53</id>
    </interactant>
    <interactant intactId="EBI-356498">
        <id>P62258</id>
        <label>YWHAE</label>
    </interactant>
    <organismsDiffer>false</organismsDiffer>
    <experiments>5</experiments>
</comment>
<comment type="subcellular location">
    <subcellularLocation>
        <location evidence="7">Nucleus</location>
    </subcellularLocation>
</comment>
<comment type="alternative products">
    <event type="alternative splicing"/>
    <isoform>
        <id>Q96S53-1</id>
        <name>1</name>
        <sequence type="displayed"/>
    </isoform>
    <isoform>
        <id>Q96S53-2</id>
        <name>2</name>
        <sequence type="described" ref="VSP_004930"/>
    </isoform>
    <isoform>
        <id>Q96S53-3</id>
        <name>3</name>
        <sequence type="described" ref="VSP_004931"/>
    </isoform>
    <text>Experimental confirmation may be lacking for some isoforms.</text>
</comment>
<comment type="tissue specificity">
    <text evidence="6 7">Predominantly expressed in testis and prostate. Found predominantly in non-germinal Sertoli cells.</text>
</comment>
<comment type="similarity">
    <text evidence="11">Belongs to the protein kinase superfamily. TKL Ser/Thr protein kinase family.</text>
</comment>
<protein>
    <recommendedName>
        <fullName>Dual specificity testis-specific protein kinase 2</fullName>
        <ecNumber>2.7.12.1</ecNumber>
    </recommendedName>
    <alternativeName>
        <fullName>Testicular protein kinase 2</fullName>
    </alternativeName>
</protein>
<gene>
    <name type="primary">TESK2</name>
</gene>
<dbReference type="EC" id="2.7.12.1"/>
<dbReference type="EMBL" id="AJ132545">
    <property type="protein sequence ID" value="CAB41970.1"/>
    <property type="molecule type" value="mRNA"/>
</dbReference>
<dbReference type="EMBL" id="AB057597">
    <property type="protein sequence ID" value="BAB62909.1"/>
    <property type="molecule type" value="mRNA"/>
</dbReference>
<dbReference type="EMBL" id="AK027573">
    <property type="protein sequence ID" value="BAG51348.1"/>
    <property type="molecule type" value="mRNA"/>
</dbReference>
<dbReference type="EMBL" id="AL359540">
    <property type="status" value="NOT_ANNOTATED_CDS"/>
    <property type="molecule type" value="Genomic_DNA"/>
</dbReference>
<dbReference type="EMBL" id="AL451136">
    <property type="status" value="NOT_ANNOTATED_CDS"/>
    <property type="molecule type" value="Genomic_DNA"/>
</dbReference>
<dbReference type="EMBL" id="CH471059">
    <property type="protein sequence ID" value="EAX06987.1"/>
    <property type="molecule type" value="Genomic_DNA"/>
</dbReference>
<dbReference type="EMBL" id="BC033085">
    <property type="protein sequence ID" value="AAH33085.1"/>
    <property type="molecule type" value="mRNA"/>
</dbReference>
<dbReference type="CCDS" id="CCDS41323.1">
    <molecule id="Q96S53-1"/>
</dbReference>
<dbReference type="RefSeq" id="NP_001307729.1">
    <property type="nucleotide sequence ID" value="NM_001320800.1"/>
</dbReference>
<dbReference type="RefSeq" id="NP_009101.2">
    <molecule id="Q96S53-1"/>
    <property type="nucleotide sequence ID" value="NM_007170.3"/>
</dbReference>
<dbReference type="RefSeq" id="XP_006710350.1">
    <property type="nucleotide sequence ID" value="XM_006710287.2"/>
</dbReference>
<dbReference type="RefSeq" id="XP_011538799.1">
    <property type="nucleotide sequence ID" value="XM_011540497.1"/>
</dbReference>
<dbReference type="SMR" id="Q96S53"/>
<dbReference type="BioGRID" id="115689">
    <property type="interactions" value="98"/>
</dbReference>
<dbReference type="FunCoup" id="Q96S53">
    <property type="interactions" value="2509"/>
</dbReference>
<dbReference type="IntAct" id="Q96S53">
    <property type="interactions" value="32"/>
</dbReference>
<dbReference type="STRING" id="9606.ENSP00000361158"/>
<dbReference type="BindingDB" id="Q96S53"/>
<dbReference type="ChEMBL" id="CHEMBL2069163"/>
<dbReference type="GuidetoPHARMACOLOGY" id="2240"/>
<dbReference type="GlyGen" id="Q96S53">
    <property type="glycosylation" value="1 site"/>
</dbReference>
<dbReference type="iPTMnet" id="Q96S53"/>
<dbReference type="PhosphoSitePlus" id="Q96S53"/>
<dbReference type="BioMuta" id="TESK2"/>
<dbReference type="DMDM" id="25009462"/>
<dbReference type="jPOST" id="Q96S53"/>
<dbReference type="MassIVE" id="Q96S53"/>
<dbReference type="PaxDb" id="9606-ENSP00000361158"/>
<dbReference type="PeptideAtlas" id="Q96S53"/>
<dbReference type="ProteomicsDB" id="78067">
    <molecule id="Q96S53-1"/>
</dbReference>
<dbReference type="ProteomicsDB" id="78068">
    <molecule id="Q96S53-2"/>
</dbReference>
<dbReference type="ProteomicsDB" id="78069">
    <molecule id="Q96S53-3"/>
</dbReference>
<dbReference type="Pumba" id="Q96S53"/>
<dbReference type="Antibodypedia" id="32628">
    <property type="antibodies" value="320 antibodies from 32 providers"/>
</dbReference>
<dbReference type="DNASU" id="10420"/>
<dbReference type="Ensembl" id="ENST00000372084.5">
    <molecule id="Q96S53-3"/>
    <property type="protein sequence ID" value="ENSP00000361156.1"/>
    <property type="gene ID" value="ENSG00000070759.17"/>
</dbReference>
<dbReference type="Ensembl" id="ENST00000372086.4">
    <molecule id="Q96S53-1"/>
    <property type="protein sequence ID" value="ENSP00000361158.3"/>
    <property type="gene ID" value="ENSG00000070759.17"/>
</dbReference>
<dbReference type="GeneID" id="10420"/>
<dbReference type="KEGG" id="hsa:10420"/>
<dbReference type="MANE-Select" id="ENST00000372086.4">
    <property type="protein sequence ID" value="ENSP00000361158.3"/>
    <property type="RefSeq nucleotide sequence ID" value="NM_007170.3"/>
    <property type="RefSeq protein sequence ID" value="NP_009101.2"/>
</dbReference>
<dbReference type="UCSC" id="uc001cns.2">
    <molecule id="Q96S53-1"/>
    <property type="organism name" value="human"/>
</dbReference>
<dbReference type="AGR" id="HGNC:11732"/>
<dbReference type="CTD" id="10420"/>
<dbReference type="DisGeNET" id="10420"/>
<dbReference type="GeneCards" id="TESK2"/>
<dbReference type="HGNC" id="HGNC:11732">
    <property type="gene designation" value="TESK2"/>
</dbReference>
<dbReference type="HPA" id="ENSG00000070759">
    <property type="expression patterns" value="Low tissue specificity"/>
</dbReference>
<dbReference type="MIM" id="604746">
    <property type="type" value="gene"/>
</dbReference>
<dbReference type="neXtProt" id="NX_Q96S53"/>
<dbReference type="OpenTargets" id="ENSG00000070759"/>
<dbReference type="PharmGKB" id="PA36449"/>
<dbReference type="VEuPathDB" id="HostDB:ENSG00000070759"/>
<dbReference type="eggNOG" id="ENOG502QTCP">
    <property type="taxonomic scope" value="Eukaryota"/>
</dbReference>
<dbReference type="GeneTree" id="ENSGT00940000158765"/>
<dbReference type="HOGENOM" id="CLU_018577_1_0_1"/>
<dbReference type="InParanoid" id="Q96S53"/>
<dbReference type="OMA" id="REAWPFR"/>
<dbReference type="OrthoDB" id="20134at2759"/>
<dbReference type="PAN-GO" id="Q96S53">
    <property type="GO annotations" value="4 GO annotations based on evolutionary models"/>
</dbReference>
<dbReference type="PhylomeDB" id="Q96S53"/>
<dbReference type="TreeFam" id="TF318014"/>
<dbReference type="BRENDA" id="2.7.10.2">
    <property type="organism ID" value="2681"/>
</dbReference>
<dbReference type="PathwayCommons" id="Q96S53"/>
<dbReference type="SignaLink" id="Q96S53"/>
<dbReference type="SIGNOR" id="Q96S53"/>
<dbReference type="BioGRID-ORCS" id="10420">
    <property type="hits" value="11 hits in 1190 CRISPR screens"/>
</dbReference>
<dbReference type="ChiTaRS" id="TESK2">
    <property type="organism name" value="human"/>
</dbReference>
<dbReference type="GeneWiki" id="TESK2"/>
<dbReference type="GenomeRNAi" id="10420"/>
<dbReference type="Pharos" id="Q96S53">
    <property type="development level" value="Tchem"/>
</dbReference>
<dbReference type="PRO" id="PR:Q96S53"/>
<dbReference type="Proteomes" id="UP000005640">
    <property type="component" value="Chromosome 1"/>
</dbReference>
<dbReference type="RNAct" id="Q96S53">
    <property type="molecule type" value="protein"/>
</dbReference>
<dbReference type="Bgee" id="ENSG00000070759">
    <property type="expression patterns" value="Expressed in cartilage tissue and 146 other cell types or tissues"/>
</dbReference>
<dbReference type="GO" id="GO:0005737">
    <property type="term" value="C:cytoplasm"/>
    <property type="evidence" value="ECO:0000318"/>
    <property type="project" value="GO_Central"/>
</dbReference>
<dbReference type="GO" id="GO:0016604">
    <property type="term" value="C:nuclear body"/>
    <property type="evidence" value="ECO:0000314"/>
    <property type="project" value="HPA"/>
</dbReference>
<dbReference type="GO" id="GO:0005654">
    <property type="term" value="C:nucleoplasm"/>
    <property type="evidence" value="ECO:0000314"/>
    <property type="project" value="HPA"/>
</dbReference>
<dbReference type="GO" id="GO:0005634">
    <property type="term" value="C:nucleus"/>
    <property type="evidence" value="ECO:0000250"/>
    <property type="project" value="UniProtKB"/>
</dbReference>
<dbReference type="GO" id="GO:0005524">
    <property type="term" value="F:ATP binding"/>
    <property type="evidence" value="ECO:0007669"/>
    <property type="project" value="UniProtKB-KW"/>
</dbReference>
<dbReference type="GO" id="GO:0046872">
    <property type="term" value="F:metal ion binding"/>
    <property type="evidence" value="ECO:0007669"/>
    <property type="project" value="UniProtKB-KW"/>
</dbReference>
<dbReference type="GO" id="GO:0004672">
    <property type="term" value="F:protein kinase activity"/>
    <property type="evidence" value="ECO:0000304"/>
    <property type="project" value="ProtInc"/>
</dbReference>
<dbReference type="GO" id="GO:0106310">
    <property type="term" value="F:protein serine kinase activity"/>
    <property type="evidence" value="ECO:0007669"/>
    <property type="project" value="RHEA"/>
</dbReference>
<dbReference type="GO" id="GO:0004674">
    <property type="term" value="F:protein serine/threonine kinase activity"/>
    <property type="evidence" value="ECO:0000250"/>
    <property type="project" value="UniProtKB"/>
</dbReference>
<dbReference type="GO" id="GO:0004712">
    <property type="term" value="F:protein serine/threonine/tyrosine kinase activity"/>
    <property type="evidence" value="ECO:0007669"/>
    <property type="project" value="UniProtKB-EC"/>
</dbReference>
<dbReference type="GO" id="GO:0004713">
    <property type="term" value="F:protein tyrosine kinase activity"/>
    <property type="evidence" value="ECO:0007669"/>
    <property type="project" value="UniProtKB-KW"/>
</dbReference>
<dbReference type="GO" id="GO:0030036">
    <property type="term" value="P:actin cytoskeleton organization"/>
    <property type="evidence" value="ECO:0000250"/>
    <property type="project" value="UniProtKB"/>
</dbReference>
<dbReference type="GO" id="GO:0048041">
    <property type="term" value="P:focal adhesion assembly"/>
    <property type="evidence" value="ECO:0000250"/>
    <property type="project" value="UniProtKB"/>
</dbReference>
<dbReference type="GO" id="GO:0006468">
    <property type="term" value="P:protein phosphorylation"/>
    <property type="evidence" value="ECO:0000250"/>
    <property type="project" value="UniProtKB"/>
</dbReference>
<dbReference type="GO" id="GO:0007283">
    <property type="term" value="P:spermatogenesis"/>
    <property type="evidence" value="ECO:0000250"/>
    <property type="project" value="UniProtKB"/>
</dbReference>
<dbReference type="CDD" id="cd14155">
    <property type="entry name" value="PKc_TESK"/>
    <property type="match status" value="1"/>
</dbReference>
<dbReference type="FunFam" id="1.10.510.10:FF:000202">
    <property type="entry name" value="Dual specificity testis-specific protein kinase 2"/>
    <property type="match status" value="1"/>
</dbReference>
<dbReference type="FunFam" id="3.30.200.20:FF:000134">
    <property type="entry name" value="Dual specificity testis-specific protein kinase 2"/>
    <property type="match status" value="1"/>
</dbReference>
<dbReference type="Gene3D" id="3.30.200.20">
    <property type="entry name" value="Phosphorylase Kinase, domain 1"/>
    <property type="match status" value="1"/>
</dbReference>
<dbReference type="Gene3D" id="1.10.510.10">
    <property type="entry name" value="Transferase(Phosphotransferase) domain 1"/>
    <property type="match status" value="1"/>
</dbReference>
<dbReference type="InterPro" id="IPR050940">
    <property type="entry name" value="Actin_reg-Ser/Thr_kinase"/>
</dbReference>
<dbReference type="InterPro" id="IPR011009">
    <property type="entry name" value="Kinase-like_dom_sf"/>
</dbReference>
<dbReference type="InterPro" id="IPR000719">
    <property type="entry name" value="Prot_kinase_dom"/>
</dbReference>
<dbReference type="InterPro" id="IPR017441">
    <property type="entry name" value="Protein_kinase_ATP_BS"/>
</dbReference>
<dbReference type="InterPro" id="IPR001245">
    <property type="entry name" value="Ser-Thr/Tyr_kinase_cat_dom"/>
</dbReference>
<dbReference type="InterPro" id="IPR008266">
    <property type="entry name" value="Tyr_kinase_AS"/>
</dbReference>
<dbReference type="PANTHER" id="PTHR46485:SF6">
    <property type="entry name" value="DUAL SPECIFICITY TESTIS-SPECIFIC PROTEIN KINASE 2"/>
    <property type="match status" value="1"/>
</dbReference>
<dbReference type="PANTHER" id="PTHR46485">
    <property type="entry name" value="LIM DOMAIN KINASE 1"/>
    <property type="match status" value="1"/>
</dbReference>
<dbReference type="Pfam" id="PF07714">
    <property type="entry name" value="PK_Tyr_Ser-Thr"/>
    <property type="match status" value="1"/>
</dbReference>
<dbReference type="PRINTS" id="PR00109">
    <property type="entry name" value="TYRKINASE"/>
</dbReference>
<dbReference type="SUPFAM" id="SSF56112">
    <property type="entry name" value="Protein kinase-like (PK-like)"/>
    <property type="match status" value="1"/>
</dbReference>
<dbReference type="PROSITE" id="PS00107">
    <property type="entry name" value="PROTEIN_KINASE_ATP"/>
    <property type="match status" value="1"/>
</dbReference>
<dbReference type="PROSITE" id="PS50011">
    <property type="entry name" value="PROTEIN_KINASE_DOM"/>
    <property type="match status" value="1"/>
</dbReference>
<dbReference type="PROSITE" id="PS00109">
    <property type="entry name" value="PROTEIN_KINASE_TYR"/>
    <property type="match status" value="1"/>
</dbReference>
<keyword id="KW-0025">Alternative splicing</keyword>
<keyword id="KW-0067">ATP-binding</keyword>
<keyword id="KW-0418">Kinase</keyword>
<keyword id="KW-0460">Magnesium</keyword>
<keyword id="KW-0464">Manganese</keyword>
<keyword id="KW-0479">Metal-binding</keyword>
<keyword id="KW-0547">Nucleotide-binding</keyword>
<keyword id="KW-0539">Nucleus</keyword>
<keyword id="KW-0597">Phosphoprotein</keyword>
<keyword id="KW-1267">Proteomics identification</keyword>
<keyword id="KW-1185">Reference proteome</keyword>
<keyword id="KW-0723">Serine/threonine-protein kinase</keyword>
<keyword id="KW-0808">Transferase</keyword>
<keyword id="KW-0829">Tyrosine-protein kinase</keyword>
<name>TESK2_HUMAN</name>
<evidence type="ECO:0000250" key="1"/>
<evidence type="ECO:0000250" key="2">
    <source>
        <dbReference type="UniProtKB" id="Q8VCT9"/>
    </source>
</evidence>
<evidence type="ECO:0000255" key="3">
    <source>
        <dbReference type="PROSITE-ProRule" id="PRU00159"/>
    </source>
</evidence>
<evidence type="ECO:0000255" key="4">
    <source>
        <dbReference type="PROSITE-ProRule" id="PRU10028"/>
    </source>
</evidence>
<evidence type="ECO:0000256" key="5">
    <source>
        <dbReference type="SAM" id="MobiDB-lite"/>
    </source>
</evidence>
<evidence type="ECO:0000269" key="6">
    <source>
    </source>
</evidence>
<evidence type="ECO:0000269" key="7">
    <source>
    </source>
</evidence>
<evidence type="ECO:0000269" key="8">
    <source>
    </source>
</evidence>
<evidence type="ECO:0000303" key="9">
    <source>
    </source>
</evidence>
<evidence type="ECO:0000303" key="10">
    <source>
    </source>
</evidence>
<evidence type="ECO:0000305" key="11"/>
<evidence type="ECO:0007744" key="12">
    <source>
    </source>
</evidence>
<evidence type="ECO:0007744" key="13">
    <source>
    </source>
</evidence>
<accession>Q96S53</accession>
<accession>Q5T422</accession>
<accession>Q5T423</accession>
<accession>Q8N520</accession>
<accession>Q9Y3Q6</accession>
<feature type="chain" id="PRO_0000086749" description="Dual specificity testis-specific protein kinase 2">
    <location>
        <begin position="1"/>
        <end position="571"/>
    </location>
</feature>
<feature type="domain" description="Protein kinase" evidence="3">
    <location>
        <begin position="58"/>
        <end position="313"/>
    </location>
</feature>
<feature type="region of interest" description="Disordered" evidence="5">
    <location>
        <begin position="521"/>
        <end position="571"/>
    </location>
</feature>
<feature type="compositionally biased region" description="Polar residues" evidence="5">
    <location>
        <begin position="552"/>
        <end position="571"/>
    </location>
</feature>
<feature type="active site" description="Proton acceptor" evidence="3 4">
    <location>
        <position position="176"/>
    </location>
</feature>
<feature type="binding site" evidence="3">
    <location>
        <begin position="64"/>
        <end position="72"/>
    </location>
    <ligand>
        <name>ATP</name>
        <dbReference type="ChEBI" id="CHEBI:30616"/>
    </ligand>
</feature>
<feature type="binding site" evidence="3">
    <location>
        <position position="87"/>
    </location>
    <ligand>
        <name>ATP</name>
        <dbReference type="ChEBI" id="CHEBI:30616"/>
    </ligand>
</feature>
<feature type="modified residue" description="Phosphoserine; by autocatalysis" evidence="1">
    <location>
        <position position="219"/>
    </location>
</feature>
<feature type="modified residue" description="Phosphoserine" evidence="12">
    <location>
        <position position="369"/>
    </location>
</feature>
<feature type="modified residue" description="Phosphoserine" evidence="13">
    <location>
        <position position="456"/>
    </location>
</feature>
<feature type="modified residue" description="Phosphoserine" evidence="2">
    <location>
        <position position="460"/>
    </location>
</feature>
<feature type="splice variant" id="VSP_004930" description="In isoform 2." evidence="9">
    <location>
        <begin position="116"/>
        <end position="131"/>
    </location>
</feature>
<feature type="splice variant" id="VSP_004931" description="In isoform 3." evidence="10">
    <location>
        <begin position="265"/>
        <end position="293"/>
    </location>
</feature>
<feature type="sequence variant" id="VAR_041214" description="In a breast infiltrating ductal carcinoma sample; somatic mutation; dbSNP:rs1428512439." evidence="8">
    <original>G</original>
    <variation>A</variation>
    <location>
        <position position="11"/>
    </location>
</feature>
<feature type="sequence conflict" description="In Ref. 6; AAH33085." evidence="11" ref="6">
    <original>R</original>
    <variation>C</variation>
    <location>
        <position position="455"/>
    </location>
</feature>
<proteinExistence type="evidence at protein level"/>
<sequence>MDRSKRNSIAGFPPRVERLEEFEGGGGGEGNVSQVGRVWPSSYRALISAFSRLTRLDDFTCEKIGSGFFSEVFKVRHRASGQVMALKMNTLSSNRANMLKEVQLMNRLSHPNILRFMGVCVHQGQLHALTEYINSGNLEQLLDSNLHLPWTVRVKLAYDIAVGLSYLHFKGIFHRDLTSKNCLIKRDENGYSAVVADFGLAEKIPDVSMGSEKLAVVGSPFWMAPEVLRDEPYNEKADVFSYGIILCEIIARIQADPDYLPRTENFGLDYDAFQHMVGDCPPDFLQLTFNCCNMDPKLRPSFVEIGKTLEEILSRLQEEEQERDRKLQPTARGLLEKAPGVKRLSSLDDKIPHKSPCPRRTIWLSRSQSDIFSRKPPRTVSVLDPYYRPRDGAARTPKVNPFSARQDLMGGKIKFFDLPSKSVISLVFDLDAPGPGTMPLADWQEPLAPPIRRWRSLPGSPEFLHQEACPFVGREESLSDGPPPRLSSLKYRVKEIPPFRASALPAAQAHEAMDCSILQEENGFGSRPQGTSPCPAGASEEMEVEERPAGSTPATFSTSGIGLQTQGKQDG</sequence>
<reference key="1">
    <citation type="journal article" date="1999" name="Genomics">
        <title>Identification and characterization of TESK2, a novel member of the LIMK/TESK family of protein kinases, predominantly expressed in testis.</title>
        <authorList>
            <person name="Rosok O."/>
            <person name="Pedeutour F."/>
            <person name="Ree A.H."/>
            <person name="Aasheim H.-C."/>
        </authorList>
    </citation>
    <scope>NUCLEOTIDE SEQUENCE [MRNA] (ISOFORM 2)</scope>
    <scope>TISSUE SPECIFICITY</scope>
    <source>
        <tissue>Testis</tissue>
    </source>
</reference>
<reference key="2">
    <citation type="journal article" date="2001" name="J. Biol. Chem.">
        <title>Cofilin phosphorylation and actin reorganization activities of testicular protein kinase 2 and its predominant expression in testicular Sertoli cells.</title>
        <authorList>
            <person name="Toshima J."/>
            <person name="Toshima J.Y."/>
            <person name="Takeuchi K."/>
            <person name="Mori R."/>
            <person name="Mizuno K."/>
        </authorList>
    </citation>
    <scope>NUCLEOTIDE SEQUENCE [MRNA] (ISOFORM 1)</scope>
    <scope>TISSUE SPECIFICITY</scope>
    <scope>SUBCELLULAR LOCATION</scope>
</reference>
<reference key="3">
    <citation type="journal article" date="2004" name="Nat. Genet.">
        <title>Complete sequencing and characterization of 21,243 full-length human cDNAs.</title>
        <authorList>
            <person name="Ota T."/>
            <person name="Suzuki Y."/>
            <person name="Nishikawa T."/>
            <person name="Otsuki T."/>
            <person name="Sugiyama T."/>
            <person name="Irie R."/>
            <person name="Wakamatsu A."/>
            <person name="Hayashi K."/>
            <person name="Sato H."/>
            <person name="Nagai K."/>
            <person name="Kimura K."/>
            <person name="Makita H."/>
            <person name="Sekine M."/>
            <person name="Obayashi M."/>
            <person name="Nishi T."/>
            <person name="Shibahara T."/>
            <person name="Tanaka T."/>
            <person name="Ishii S."/>
            <person name="Yamamoto J."/>
            <person name="Saito K."/>
            <person name="Kawai Y."/>
            <person name="Isono Y."/>
            <person name="Nakamura Y."/>
            <person name="Nagahari K."/>
            <person name="Murakami K."/>
            <person name="Yasuda T."/>
            <person name="Iwayanagi T."/>
            <person name="Wagatsuma M."/>
            <person name="Shiratori A."/>
            <person name="Sudo H."/>
            <person name="Hosoiri T."/>
            <person name="Kaku Y."/>
            <person name="Kodaira H."/>
            <person name="Kondo H."/>
            <person name="Sugawara M."/>
            <person name="Takahashi M."/>
            <person name="Kanda K."/>
            <person name="Yokoi T."/>
            <person name="Furuya T."/>
            <person name="Kikkawa E."/>
            <person name="Omura Y."/>
            <person name="Abe K."/>
            <person name="Kamihara K."/>
            <person name="Katsuta N."/>
            <person name="Sato K."/>
            <person name="Tanikawa M."/>
            <person name="Yamazaki M."/>
            <person name="Ninomiya K."/>
            <person name="Ishibashi T."/>
            <person name="Yamashita H."/>
            <person name="Murakawa K."/>
            <person name="Fujimori K."/>
            <person name="Tanai H."/>
            <person name="Kimata M."/>
            <person name="Watanabe M."/>
            <person name="Hiraoka S."/>
            <person name="Chiba Y."/>
            <person name="Ishida S."/>
            <person name="Ono Y."/>
            <person name="Takiguchi S."/>
            <person name="Watanabe S."/>
            <person name="Yosida M."/>
            <person name="Hotuta T."/>
            <person name="Kusano J."/>
            <person name="Kanehori K."/>
            <person name="Takahashi-Fujii A."/>
            <person name="Hara H."/>
            <person name="Tanase T.-O."/>
            <person name="Nomura Y."/>
            <person name="Togiya S."/>
            <person name="Komai F."/>
            <person name="Hara R."/>
            <person name="Takeuchi K."/>
            <person name="Arita M."/>
            <person name="Imose N."/>
            <person name="Musashino K."/>
            <person name="Yuuki H."/>
            <person name="Oshima A."/>
            <person name="Sasaki N."/>
            <person name="Aotsuka S."/>
            <person name="Yoshikawa Y."/>
            <person name="Matsunawa H."/>
            <person name="Ichihara T."/>
            <person name="Shiohata N."/>
            <person name="Sano S."/>
            <person name="Moriya S."/>
            <person name="Momiyama H."/>
            <person name="Satoh N."/>
            <person name="Takami S."/>
            <person name="Terashima Y."/>
            <person name="Suzuki O."/>
            <person name="Nakagawa S."/>
            <person name="Senoh A."/>
            <person name="Mizoguchi H."/>
            <person name="Goto Y."/>
            <person name="Shimizu F."/>
            <person name="Wakebe H."/>
            <person name="Hishigaki H."/>
            <person name="Watanabe T."/>
            <person name="Sugiyama A."/>
            <person name="Takemoto M."/>
            <person name="Kawakami B."/>
            <person name="Yamazaki M."/>
            <person name="Watanabe K."/>
            <person name="Kumagai A."/>
            <person name="Itakura S."/>
            <person name="Fukuzumi Y."/>
            <person name="Fujimori Y."/>
            <person name="Komiyama M."/>
            <person name="Tashiro H."/>
            <person name="Tanigami A."/>
            <person name="Fujiwara T."/>
            <person name="Ono T."/>
            <person name="Yamada K."/>
            <person name="Fujii Y."/>
            <person name="Ozaki K."/>
            <person name="Hirao M."/>
            <person name="Ohmori Y."/>
            <person name="Kawabata A."/>
            <person name="Hikiji T."/>
            <person name="Kobatake N."/>
            <person name="Inagaki H."/>
            <person name="Ikema Y."/>
            <person name="Okamoto S."/>
            <person name="Okitani R."/>
            <person name="Kawakami T."/>
            <person name="Noguchi S."/>
            <person name="Itoh T."/>
            <person name="Shigeta K."/>
            <person name="Senba T."/>
            <person name="Matsumura K."/>
            <person name="Nakajima Y."/>
            <person name="Mizuno T."/>
            <person name="Morinaga M."/>
            <person name="Sasaki M."/>
            <person name="Togashi T."/>
            <person name="Oyama M."/>
            <person name="Hata H."/>
            <person name="Watanabe M."/>
            <person name="Komatsu T."/>
            <person name="Mizushima-Sugano J."/>
            <person name="Satoh T."/>
            <person name="Shirai Y."/>
            <person name="Takahashi Y."/>
            <person name="Nakagawa K."/>
            <person name="Okumura K."/>
            <person name="Nagase T."/>
            <person name="Nomura N."/>
            <person name="Kikuchi H."/>
            <person name="Masuho Y."/>
            <person name="Yamashita R."/>
            <person name="Nakai K."/>
            <person name="Yada T."/>
            <person name="Nakamura Y."/>
            <person name="Ohara O."/>
            <person name="Isogai T."/>
            <person name="Sugano S."/>
        </authorList>
    </citation>
    <scope>NUCLEOTIDE SEQUENCE [LARGE SCALE MRNA] (ISOFORM 1)</scope>
</reference>
<reference key="4">
    <citation type="journal article" date="2006" name="Nature">
        <title>The DNA sequence and biological annotation of human chromosome 1.</title>
        <authorList>
            <person name="Gregory S.G."/>
            <person name="Barlow K.F."/>
            <person name="McLay K.E."/>
            <person name="Kaul R."/>
            <person name="Swarbreck D."/>
            <person name="Dunham A."/>
            <person name="Scott C.E."/>
            <person name="Howe K.L."/>
            <person name="Woodfine K."/>
            <person name="Spencer C.C.A."/>
            <person name="Jones M.C."/>
            <person name="Gillson C."/>
            <person name="Searle S."/>
            <person name="Zhou Y."/>
            <person name="Kokocinski F."/>
            <person name="McDonald L."/>
            <person name="Evans R."/>
            <person name="Phillips K."/>
            <person name="Atkinson A."/>
            <person name="Cooper R."/>
            <person name="Jones C."/>
            <person name="Hall R.E."/>
            <person name="Andrews T.D."/>
            <person name="Lloyd C."/>
            <person name="Ainscough R."/>
            <person name="Almeida J.P."/>
            <person name="Ambrose K.D."/>
            <person name="Anderson F."/>
            <person name="Andrew R.W."/>
            <person name="Ashwell R.I.S."/>
            <person name="Aubin K."/>
            <person name="Babbage A.K."/>
            <person name="Bagguley C.L."/>
            <person name="Bailey J."/>
            <person name="Beasley H."/>
            <person name="Bethel G."/>
            <person name="Bird C.P."/>
            <person name="Bray-Allen S."/>
            <person name="Brown J.Y."/>
            <person name="Brown A.J."/>
            <person name="Buckley D."/>
            <person name="Burton J."/>
            <person name="Bye J."/>
            <person name="Carder C."/>
            <person name="Chapman J.C."/>
            <person name="Clark S.Y."/>
            <person name="Clarke G."/>
            <person name="Clee C."/>
            <person name="Cobley V."/>
            <person name="Collier R.E."/>
            <person name="Corby N."/>
            <person name="Coville G.J."/>
            <person name="Davies J."/>
            <person name="Deadman R."/>
            <person name="Dunn M."/>
            <person name="Earthrowl M."/>
            <person name="Ellington A.G."/>
            <person name="Errington H."/>
            <person name="Frankish A."/>
            <person name="Frankland J."/>
            <person name="French L."/>
            <person name="Garner P."/>
            <person name="Garnett J."/>
            <person name="Gay L."/>
            <person name="Ghori M.R.J."/>
            <person name="Gibson R."/>
            <person name="Gilby L.M."/>
            <person name="Gillett W."/>
            <person name="Glithero R.J."/>
            <person name="Grafham D.V."/>
            <person name="Griffiths C."/>
            <person name="Griffiths-Jones S."/>
            <person name="Grocock R."/>
            <person name="Hammond S."/>
            <person name="Harrison E.S.I."/>
            <person name="Hart E."/>
            <person name="Haugen E."/>
            <person name="Heath P.D."/>
            <person name="Holmes S."/>
            <person name="Holt K."/>
            <person name="Howden P.J."/>
            <person name="Hunt A.R."/>
            <person name="Hunt S.E."/>
            <person name="Hunter G."/>
            <person name="Isherwood J."/>
            <person name="James R."/>
            <person name="Johnson C."/>
            <person name="Johnson D."/>
            <person name="Joy A."/>
            <person name="Kay M."/>
            <person name="Kershaw J.K."/>
            <person name="Kibukawa M."/>
            <person name="Kimberley A.M."/>
            <person name="King A."/>
            <person name="Knights A.J."/>
            <person name="Lad H."/>
            <person name="Laird G."/>
            <person name="Lawlor S."/>
            <person name="Leongamornlert D.A."/>
            <person name="Lloyd D.M."/>
            <person name="Loveland J."/>
            <person name="Lovell J."/>
            <person name="Lush M.J."/>
            <person name="Lyne R."/>
            <person name="Martin S."/>
            <person name="Mashreghi-Mohammadi M."/>
            <person name="Matthews L."/>
            <person name="Matthews N.S.W."/>
            <person name="McLaren S."/>
            <person name="Milne S."/>
            <person name="Mistry S."/>
            <person name="Moore M.J.F."/>
            <person name="Nickerson T."/>
            <person name="O'Dell C.N."/>
            <person name="Oliver K."/>
            <person name="Palmeiri A."/>
            <person name="Palmer S.A."/>
            <person name="Parker A."/>
            <person name="Patel D."/>
            <person name="Pearce A.V."/>
            <person name="Peck A.I."/>
            <person name="Pelan S."/>
            <person name="Phelps K."/>
            <person name="Phillimore B.J."/>
            <person name="Plumb R."/>
            <person name="Rajan J."/>
            <person name="Raymond C."/>
            <person name="Rouse G."/>
            <person name="Saenphimmachak C."/>
            <person name="Sehra H.K."/>
            <person name="Sheridan E."/>
            <person name="Shownkeen R."/>
            <person name="Sims S."/>
            <person name="Skuce C.D."/>
            <person name="Smith M."/>
            <person name="Steward C."/>
            <person name="Subramanian S."/>
            <person name="Sycamore N."/>
            <person name="Tracey A."/>
            <person name="Tromans A."/>
            <person name="Van Helmond Z."/>
            <person name="Wall M."/>
            <person name="Wallis J.M."/>
            <person name="White S."/>
            <person name="Whitehead S.L."/>
            <person name="Wilkinson J.E."/>
            <person name="Willey D.L."/>
            <person name="Williams H."/>
            <person name="Wilming L."/>
            <person name="Wray P.W."/>
            <person name="Wu Z."/>
            <person name="Coulson A."/>
            <person name="Vaudin M."/>
            <person name="Sulston J.E."/>
            <person name="Durbin R.M."/>
            <person name="Hubbard T."/>
            <person name="Wooster R."/>
            <person name="Dunham I."/>
            <person name="Carter N.P."/>
            <person name="McVean G."/>
            <person name="Ross M.T."/>
            <person name="Harrow J."/>
            <person name="Olson M.V."/>
            <person name="Beck S."/>
            <person name="Rogers J."/>
            <person name="Bentley D.R."/>
        </authorList>
    </citation>
    <scope>NUCLEOTIDE SEQUENCE [LARGE SCALE GENOMIC DNA]</scope>
</reference>
<reference key="5">
    <citation type="submission" date="2005-09" db="EMBL/GenBank/DDBJ databases">
        <authorList>
            <person name="Mural R.J."/>
            <person name="Istrail S."/>
            <person name="Sutton G."/>
            <person name="Florea L."/>
            <person name="Halpern A.L."/>
            <person name="Mobarry C.M."/>
            <person name="Lippert R."/>
            <person name="Walenz B."/>
            <person name="Shatkay H."/>
            <person name="Dew I."/>
            <person name="Miller J.R."/>
            <person name="Flanigan M.J."/>
            <person name="Edwards N.J."/>
            <person name="Bolanos R."/>
            <person name="Fasulo D."/>
            <person name="Halldorsson B.V."/>
            <person name="Hannenhalli S."/>
            <person name="Turner R."/>
            <person name="Yooseph S."/>
            <person name="Lu F."/>
            <person name="Nusskern D.R."/>
            <person name="Shue B.C."/>
            <person name="Zheng X.H."/>
            <person name="Zhong F."/>
            <person name="Delcher A.L."/>
            <person name="Huson D.H."/>
            <person name="Kravitz S.A."/>
            <person name="Mouchard L."/>
            <person name="Reinert K."/>
            <person name="Remington K.A."/>
            <person name="Clark A.G."/>
            <person name="Waterman M.S."/>
            <person name="Eichler E.E."/>
            <person name="Adams M.D."/>
            <person name="Hunkapiller M.W."/>
            <person name="Myers E.W."/>
            <person name="Venter J.C."/>
        </authorList>
    </citation>
    <scope>NUCLEOTIDE SEQUENCE [LARGE SCALE GENOMIC DNA]</scope>
</reference>
<reference key="6">
    <citation type="journal article" date="2004" name="Genome Res.">
        <title>The status, quality, and expansion of the NIH full-length cDNA project: the Mammalian Gene Collection (MGC).</title>
        <authorList>
            <consortium name="The MGC Project Team"/>
        </authorList>
    </citation>
    <scope>NUCLEOTIDE SEQUENCE [LARGE SCALE MRNA] (ISOFORM 3)</scope>
    <source>
        <tissue>Brain</tissue>
    </source>
</reference>
<reference key="7">
    <citation type="journal article" date="2013" name="J. Proteome Res.">
        <title>Toward a comprehensive characterization of a human cancer cell phosphoproteome.</title>
        <authorList>
            <person name="Zhou H."/>
            <person name="Di Palma S."/>
            <person name="Preisinger C."/>
            <person name="Peng M."/>
            <person name="Polat A.N."/>
            <person name="Heck A.J."/>
            <person name="Mohammed S."/>
        </authorList>
    </citation>
    <scope>PHOSPHORYLATION [LARGE SCALE ANALYSIS] AT SER-369</scope>
    <scope>IDENTIFICATION BY MASS SPECTROMETRY [LARGE SCALE ANALYSIS]</scope>
    <source>
        <tissue>Cervix carcinoma</tissue>
        <tissue>Erythroleukemia</tissue>
    </source>
</reference>
<reference key="8">
    <citation type="journal article" date="2014" name="J. Proteomics">
        <title>An enzyme assisted RP-RPLC approach for in-depth analysis of human liver phosphoproteome.</title>
        <authorList>
            <person name="Bian Y."/>
            <person name="Song C."/>
            <person name="Cheng K."/>
            <person name="Dong M."/>
            <person name="Wang F."/>
            <person name="Huang J."/>
            <person name="Sun D."/>
            <person name="Wang L."/>
            <person name="Ye M."/>
            <person name="Zou H."/>
        </authorList>
    </citation>
    <scope>PHOSPHORYLATION [LARGE SCALE ANALYSIS] AT SER-456</scope>
    <scope>IDENTIFICATION BY MASS SPECTROMETRY [LARGE SCALE ANALYSIS]</scope>
    <source>
        <tissue>Liver</tissue>
    </source>
</reference>
<reference key="9">
    <citation type="journal article" date="2007" name="Nature">
        <title>Patterns of somatic mutation in human cancer genomes.</title>
        <authorList>
            <person name="Greenman C."/>
            <person name="Stephens P."/>
            <person name="Smith R."/>
            <person name="Dalgliesh G.L."/>
            <person name="Hunter C."/>
            <person name="Bignell G."/>
            <person name="Davies H."/>
            <person name="Teague J."/>
            <person name="Butler A."/>
            <person name="Stevens C."/>
            <person name="Edkins S."/>
            <person name="O'Meara S."/>
            <person name="Vastrik I."/>
            <person name="Schmidt E.E."/>
            <person name="Avis T."/>
            <person name="Barthorpe S."/>
            <person name="Bhamra G."/>
            <person name="Buck G."/>
            <person name="Choudhury B."/>
            <person name="Clements J."/>
            <person name="Cole J."/>
            <person name="Dicks E."/>
            <person name="Forbes S."/>
            <person name="Gray K."/>
            <person name="Halliday K."/>
            <person name="Harrison R."/>
            <person name="Hills K."/>
            <person name="Hinton J."/>
            <person name="Jenkinson A."/>
            <person name="Jones D."/>
            <person name="Menzies A."/>
            <person name="Mironenko T."/>
            <person name="Perry J."/>
            <person name="Raine K."/>
            <person name="Richardson D."/>
            <person name="Shepherd R."/>
            <person name="Small A."/>
            <person name="Tofts C."/>
            <person name="Varian J."/>
            <person name="Webb T."/>
            <person name="West S."/>
            <person name="Widaa S."/>
            <person name="Yates A."/>
            <person name="Cahill D.P."/>
            <person name="Louis D.N."/>
            <person name="Goldstraw P."/>
            <person name="Nicholson A.G."/>
            <person name="Brasseur F."/>
            <person name="Looijenga L."/>
            <person name="Weber B.L."/>
            <person name="Chiew Y.-E."/>
            <person name="DeFazio A."/>
            <person name="Greaves M.F."/>
            <person name="Green A.R."/>
            <person name="Campbell P."/>
            <person name="Birney E."/>
            <person name="Easton D.F."/>
            <person name="Chenevix-Trench G."/>
            <person name="Tan M.-H."/>
            <person name="Khoo S.K."/>
            <person name="Teh B.T."/>
            <person name="Yuen S.T."/>
            <person name="Leung S.Y."/>
            <person name="Wooster R."/>
            <person name="Futreal P.A."/>
            <person name="Stratton M.R."/>
        </authorList>
    </citation>
    <scope>VARIANT [LARGE SCALE ANALYSIS] ALA-11</scope>
</reference>